<evidence type="ECO:0000255" key="1">
    <source>
        <dbReference type="HAMAP-Rule" id="MF_04066"/>
    </source>
</evidence>
<name>NS1_INBMD</name>
<proteinExistence type="inferred from homology"/>
<sequence length="281" mass="31897">MADNMTTTQIEVGPGATNATINFEAGILECYERLSWQRALDYPGQDRLNRLKRKLESRIKTHNKSEPESKRMSLEERKAIGVKMMKVLLFMNPSAGIEGFEPYCMKNSSTSNCPNCNWTDYPPTPGKCLDDIEEEPENVDDPTEIVLRDMNNKDARQKIKEEVNTQKEGKFRLAIKRDIRNVVSLRVLVNGTFLKHPNGYKSLSTLHRLNAYDQSGRLVAKLVATDDLTVEDEEDGHRILNSLFERFDEGHSKPIRAAETAVGVLSQFGQEHRLSPEEGDN</sequence>
<keyword id="KW-0025">Alternative splicing</keyword>
<keyword id="KW-1035">Host cytoplasm</keyword>
<keyword id="KW-1048">Host nucleus</keyword>
<keyword id="KW-0945">Host-virus interaction</keyword>
<keyword id="KW-1090">Inhibition of host innate immune response by virus</keyword>
<keyword id="KW-1114">Inhibition of host interferon signaling pathway by virus</keyword>
<keyword id="KW-1095">Inhibition of host ISG15 by virus</keyword>
<keyword id="KW-1102">Inhibition of host PKR by virus</keyword>
<keyword id="KW-0922">Interferon antiviral system evasion</keyword>
<keyword id="KW-0694">RNA-binding</keyword>
<keyword id="KW-0899">Viral immunoevasion</keyword>
<protein>
    <recommendedName>
        <fullName evidence="1">Non-structural protein 1</fullName>
        <shortName evidence="1">NS1</shortName>
    </recommendedName>
    <alternativeName>
        <fullName evidence="1">NS1A</fullName>
    </alternativeName>
</protein>
<comment type="function">
    <text evidence="1">Binds and inhibits the conjugation of the ubiquitin-like G1P2/ISG15 protein to its target proteins. Since G1P2/ISG15 is an early antiviral protein, NS1 may inhibit the host antiviral response. Prevents EIF2AK2/PKR activation, either by binding double strand RNA or by interacting directly with EIF2AK2/PKR. Also binds poly(A) and U6 snRNA.</text>
</comment>
<comment type="subunit">
    <text evidence="1">Homodimer. Interacts with and inhibits human G1P2 conjugation by UBE1L.</text>
</comment>
<comment type="subcellular location">
    <subcellularLocation>
        <location evidence="1">Host cytoplasm</location>
    </subcellularLocation>
    <subcellularLocation>
        <location evidence="1">Host nucleus</location>
    </subcellularLocation>
</comment>
<comment type="alternative products">
    <event type="alternative splicing"/>
    <isoform>
        <id>P12597-1</id>
        <name>NS1</name>
        <sequence type="displayed"/>
    </isoform>
    <isoform>
        <id>P12597-2</id>
        <name>NEP</name>
        <name>NS2</name>
        <sequence type="not described"/>
    </isoform>
</comment>
<comment type="similarity">
    <text evidence="1">Belongs to the influenza B viruses NS1 family.</text>
</comment>
<dbReference type="EMBL" id="M19796">
    <property type="protein sequence ID" value="AAA43725.1"/>
    <property type="molecule type" value="Genomic_RNA"/>
</dbReference>
<dbReference type="SMR" id="P12597"/>
<dbReference type="GO" id="GO:0030430">
    <property type="term" value="C:host cell cytoplasm"/>
    <property type="evidence" value="ECO:0007669"/>
    <property type="project" value="UniProtKB-SubCell"/>
</dbReference>
<dbReference type="GO" id="GO:0042025">
    <property type="term" value="C:host cell nucleus"/>
    <property type="evidence" value="ECO:0007669"/>
    <property type="project" value="UniProtKB-SubCell"/>
</dbReference>
<dbReference type="GO" id="GO:0030291">
    <property type="term" value="F:protein serine/threonine kinase inhibitor activity"/>
    <property type="evidence" value="ECO:0007669"/>
    <property type="project" value="UniProtKB-KW"/>
</dbReference>
<dbReference type="GO" id="GO:0003723">
    <property type="term" value="F:RNA binding"/>
    <property type="evidence" value="ECO:0007669"/>
    <property type="project" value="UniProtKB-KW"/>
</dbReference>
<dbReference type="GO" id="GO:0039579">
    <property type="term" value="P:symbiont-mediated suppression of host ISG15-protein conjugation"/>
    <property type="evidence" value="ECO:0007669"/>
    <property type="project" value="UniProtKB-KW"/>
</dbReference>
<dbReference type="GO" id="GO:0039580">
    <property type="term" value="P:symbiont-mediated suppression of host PKR/eIFalpha signaling"/>
    <property type="evidence" value="ECO:0007669"/>
    <property type="project" value="UniProtKB-KW"/>
</dbReference>
<dbReference type="GO" id="GO:0039502">
    <property type="term" value="P:symbiont-mediated suppression of host type I interferon-mediated signaling pathway"/>
    <property type="evidence" value="ECO:0007669"/>
    <property type="project" value="UniProtKB-KW"/>
</dbReference>
<dbReference type="Gene3D" id="1.10.287.10">
    <property type="entry name" value="S15/NS1, RNA-binding"/>
    <property type="match status" value="1"/>
</dbReference>
<dbReference type="HAMAP" id="MF_04066">
    <property type="entry name" value="INFV_NS1"/>
    <property type="match status" value="1"/>
</dbReference>
<dbReference type="InterPro" id="IPR004208">
    <property type="entry name" value="NS1"/>
</dbReference>
<dbReference type="InterPro" id="IPR009068">
    <property type="entry name" value="uS15_NS1_RNA-bd_sf"/>
</dbReference>
<dbReference type="Pfam" id="PF02942">
    <property type="entry name" value="Flu_B_NS1"/>
    <property type="match status" value="1"/>
</dbReference>
<dbReference type="PIRSF" id="PIRSF003938">
    <property type="entry name" value="Flu_B_NS1"/>
    <property type="match status" value="1"/>
</dbReference>
<dbReference type="SUPFAM" id="SSF47060">
    <property type="entry name" value="S15/NS1 RNA-binding domain"/>
    <property type="match status" value="1"/>
</dbReference>
<organismHost>
    <name type="scientific">Homo sapiens</name>
    <name type="common">Human</name>
    <dbReference type="NCBI Taxonomy" id="9606"/>
</organismHost>
<reference key="1">
    <citation type="journal article" date="1988" name="Virology">
        <title>Influenza B virus evolution: co-circulating lineages and comparison of evolutionary pattern with those of influenza A and C viruses.</title>
        <authorList>
            <person name="Yamashita M."/>
            <person name="Krystal M."/>
            <person name="Fitch W.M."/>
            <person name="Palese P."/>
        </authorList>
    </citation>
    <scope>NUCLEOTIDE SEQUENCE [GENOMIC RNA]</scope>
</reference>
<reference key="2">
    <citation type="journal article" date="2003" name="Virology">
        <title>Intracellular warfare between human influenza viruses and human cells: the roles of the viral NS1 protein.</title>
        <authorList>
            <person name="Krug R.M."/>
            <person name="Yuan W."/>
            <person name="Noah D.L."/>
            <person name="Latham A.G."/>
        </authorList>
    </citation>
    <scope>REVIEW</scope>
</reference>
<gene>
    <name evidence="1" type="primary">NS</name>
</gene>
<feature type="chain" id="PRO_0000078966" description="Non-structural protein 1">
    <location>
        <begin position="1"/>
        <end position="281"/>
    </location>
</feature>
<feature type="region of interest" description="G1P2-binding">
    <location>
        <begin position="1"/>
        <end position="103"/>
    </location>
</feature>
<feature type="region of interest" description="RNA-binding and homodimerization" evidence="1">
    <location>
        <begin position="1"/>
        <end position="93"/>
    </location>
</feature>
<feature type="short sequence motif" description="Nuclear localization signal" evidence="1">
    <location>
        <begin position="50"/>
        <end position="55"/>
    </location>
</feature>
<organism>
    <name type="scientific">Influenza B virus (strain B/Maryland/1959)</name>
    <dbReference type="NCBI Taxonomy" id="11537"/>
    <lineage>
        <taxon>Viruses</taxon>
        <taxon>Riboviria</taxon>
        <taxon>Orthornavirae</taxon>
        <taxon>Negarnaviricota</taxon>
        <taxon>Polyploviricotina</taxon>
        <taxon>Insthoviricetes</taxon>
        <taxon>Articulavirales</taxon>
        <taxon>Orthomyxoviridae</taxon>
        <taxon>Betainfluenzavirus</taxon>
        <taxon>Betainfluenzavirus influenzae</taxon>
        <taxon>Influenza B virus</taxon>
    </lineage>
</organism>
<accession>P12597</accession>